<protein>
    <recommendedName>
        <fullName>rRNA adenine N-6-methyltransferase</fullName>
        <shortName>NMT</shortName>
        <ecNumber>2.1.1.184</ecNumber>
    </recommendedName>
    <alternativeName>
        <fullName>Erythromycin resistance protein</fullName>
    </alternativeName>
    <alternativeName>
        <fullName>Macrolide-lincosamide-streptogramin B resistance protein</fullName>
    </alternativeName>
</protein>
<organism>
    <name type="scientific">Saccharopolyspora erythraea (strain ATCC 11635 / DSM 40517 / JCM 4748 / NBRC 13426 / NCIMB 8594 / NRRL 2338)</name>
    <dbReference type="NCBI Taxonomy" id="405948"/>
    <lineage>
        <taxon>Bacteria</taxon>
        <taxon>Bacillati</taxon>
        <taxon>Actinomycetota</taxon>
        <taxon>Actinomycetes</taxon>
        <taxon>Pseudonocardiales</taxon>
        <taxon>Pseudonocardiaceae</taxon>
        <taxon>Saccharopolyspora</taxon>
    </lineage>
</organism>
<evidence type="ECO:0000255" key="1">
    <source>
        <dbReference type="PROSITE-ProRule" id="PRU01026"/>
    </source>
</evidence>
<evidence type="ECO:0000256" key="2">
    <source>
        <dbReference type="SAM" id="MobiDB-lite"/>
    </source>
</evidence>
<evidence type="ECO:0000305" key="3"/>
<evidence type="ECO:0007829" key="4">
    <source>
        <dbReference type="PDB" id="6NVM"/>
    </source>
</evidence>
<dbReference type="EC" id="2.1.1.184"/>
<dbReference type="EMBL" id="M11200">
    <property type="protein sequence ID" value="AAA26492.1"/>
    <property type="molecule type" value="Genomic_DNA"/>
</dbReference>
<dbReference type="EMBL" id="AM420293">
    <property type="protein sequence ID" value="CAM00074.1"/>
    <property type="molecule type" value="Genomic_DNA"/>
</dbReference>
<dbReference type="EMBL" id="X51891">
    <property type="protein sequence ID" value="CAB60001.1"/>
    <property type="molecule type" value="Genomic_DNA"/>
</dbReference>
<dbReference type="PIR" id="A91534">
    <property type="entry name" value="XYSMRE"/>
</dbReference>
<dbReference type="RefSeq" id="WP_009950391.1">
    <property type="nucleotide sequence ID" value="NC_009142.1"/>
</dbReference>
<dbReference type="PDB" id="6NVM">
    <property type="method" value="X-ray"/>
    <property type="resolution" value="1.75 A"/>
    <property type="chains" value="A=1-290"/>
</dbReference>
<dbReference type="PDBsum" id="6NVM"/>
<dbReference type="SMR" id="P07287"/>
<dbReference type="STRING" id="405948.SACE_0733"/>
<dbReference type="CARD" id="ARO:3000326">
    <property type="molecule name" value="ErmE"/>
    <property type="mechanism identifier" value="ARO:0001001"/>
    <property type="mechanism name" value="antibiotic target alteration"/>
</dbReference>
<dbReference type="KEGG" id="ag:CAB60001"/>
<dbReference type="KEGG" id="sen:SACE_0733"/>
<dbReference type="eggNOG" id="COG0030">
    <property type="taxonomic scope" value="Bacteria"/>
</dbReference>
<dbReference type="HOGENOM" id="CLU_041220_3_1_11"/>
<dbReference type="OrthoDB" id="3616874at2"/>
<dbReference type="BioCyc" id="MetaCyc:MONOMER-17659"/>
<dbReference type="Proteomes" id="UP000006728">
    <property type="component" value="Chromosome"/>
</dbReference>
<dbReference type="GO" id="GO:0005829">
    <property type="term" value="C:cytosol"/>
    <property type="evidence" value="ECO:0007669"/>
    <property type="project" value="TreeGrafter"/>
</dbReference>
<dbReference type="GO" id="GO:0052910">
    <property type="term" value="F:23S rRNA (adenine(2085)-N(6))-dimethyltransferase activity"/>
    <property type="evidence" value="ECO:0007669"/>
    <property type="project" value="UniProtKB-EC"/>
</dbReference>
<dbReference type="GO" id="GO:0003723">
    <property type="term" value="F:RNA binding"/>
    <property type="evidence" value="ECO:0007669"/>
    <property type="project" value="UniProtKB-KW"/>
</dbReference>
<dbReference type="GO" id="GO:0000179">
    <property type="term" value="F:rRNA (adenine-N6,N6-)-dimethyltransferase activity"/>
    <property type="evidence" value="ECO:0007669"/>
    <property type="project" value="InterPro"/>
</dbReference>
<dbReference type="GO" id="GO:0046677">
    <property type="term" value="P:response to antibiotic"/>
    <property type="evidence" value="ECO:0007669"/>
    <property type="project" value="UniProtKB-KW"/>
</dbReference>
<dbReference type="CDD" id="cd02440">
    <property type="entry name" value="AdoMet_MTases"/>
    <property type="match status" value="1"/>
</dbReference>
<dbReference type="Gene3D" id="1.10.8.100">
    <property type="entry name" value="Ribosomal RNA adenine dimethylase-like, domain 2"/>
    <property type="match status" value="1"/>
</dbReference>
<dbReference type="Gene3D" id="3.40.50.150">
    <property type="entry name" value="Vaccinia Virus protein VP39"/>
    <property type="match status" value="1"/>
</dbReference>
<dbReference type="InterPro" id="IPR001737">
    <property type="entry name" value="KsgA/Erm"/>
</dbReference>
<dbReference type="InterPro" id="IPR023165">
    <property type="entry name" value="rRNA_Ade_diMease-like_C"/>
</dbReference>
<dbReference type="InterPro" id="IPR020596">
    <property type="entry name" value="rRNA_Ade_Mease_Trfase_CS"/>
</dbReference>
<dbReference type="InterPro" id="IPR020598">
    <property type="entry name" value="rRNA_Ade_methylase_Trfase_N"/>
</dbReference>
<dbReference type="InterPro" id="IPR029063">
    <property type="entry name" value="SAM-dependent_MTases_sf"/>
</dbReference>
<dbReference type="NCBIfam" id="NF000499">
    <property type="entry name" value="Erm23S_rRNA_broad"/>
    <property type="match status" value="1"/>
</dbReference>
<dbReference type="NCBIfam" id="NF000337">
    <property type="entry name" value="erm_SHROVE"/>
    <property type="match status" value="1"/>
</dbReference>
<dbReference type="PANTHER" id="PTHR11727">
    <property type="entry name" value="DIMETHYLADENOSINE TRANSFERASE"/>
    <property type="match status" value="1"/>
</dbReference>
<dbReference type="PANTHER" id="PTHR11727:SF7">
    <property type="entry name" value="DIMETHYLADENOSINE TRANSFERASE-RELATED"/>
    <property type="match status" value="1"/>
</dbReference>
<dbReference type="Pfam" id="PF00398">
    <property type="entry name" value="RrnaAD"/>
    <property type="match status" value="1"/>
</dbReference>
<dbReference type="SMART" id="SM00650">
    <property type="entry name" value="rADc"/>
    <property type="match status" value="1"/>
</dbReference>
<dbReference type="SUPFAM" id="SSF53335">
    <property type="entry name" value="S-adenosyl-L-methionine-dependent methyltransferases"/>
    <property type="match status" value="1"/>
</dbReference>
<dbReference type="PROSITE" id="PS01131">
    <property type="entry name" value="RRNA_A_DIMETH"/>
    <property type="match status" value="1"/>
</dbReference>
<dbReference type="PROSITE" id="PS51689">
    <property type="entry name" value="SAM_RNA_A_N6_MT"/>
    <property type="match status" value="1"/>
</dbReference>
<keyword id="KW-0002">3D-structure</keyword>
<keyword id="KW-0046">Antibiotic resistance</keyword>
<keyword id="KW-0489">Methyltransferase</keyword>
<keyword id="KW-1185">Reference proteome</keyword>
<keyword id="KW-0694">RNA-binding</keyword>
<keyword id="KW-0949">S-adenosyl-L-methionine</keyword>
<keyword id="KW-0808">Transferase</keyword>
<sequence>MSSSDEQPRPRRRNQDRQHPNQNRPVLGRTERDRNRRQFGQNFLRDRKTIARIAETAELRPDLPVLEAGPGEGLLTRELADRARQVTSYEIDPRLAKSLREKLSGHPNIEVVNADFLTAEPPPEPFAFVGAIPYGITSAIVDWCLEAPTIETATMVTQLEFARKRTGDYGRWSRLTVMTWPLFEWEFVEKVDRRLFKPVPKVDSAIMRLRRRAEPLLEGAALERYESMVELCFTGVGGNIQASLLRKYPRRRVEAALDHAGVGGGAVVAYVRPEQWLRLFERLDQKNEPRGGQPQRGRRTGGRDHGDRRTGGQDRGDRRTGGRDHRDRQASGHGDRRSSGRNRDDGRTGEREQGDQGGRRGPSGGGRTGGRPGRRGGPGQR</sequence>
<feature type="chain" id="PRO_0000101677" description="rRNA adenine N-6-methyltransferase">
    <location>
        <begin position="1"/>
        <end position="381"/>
    </location>
</feature>
<feature type="region of interest" description="Disordered" evidence="2">
    <location>
        <begin position="1"/>
        <end position="42"/>
    </location>
</feature>
<feature type="region of interest" description="Disordered" evidence="2">
    <location>
        <begin position="282"/>
        <end position="381"/>
    </location>
</feature>
<feature type="compositionally biased region" description="Basic and acidic residues" evidence="2">
    <location>
        <begin position="1"/>
        <end position="19"/>
    </location>
</feature>
<feature type="compositionally biased region" description="Basic and acidic residues" evidence="2">
    <location>
        <begin position="301"/>
        <end position="358"/>
    </location>
</feature>
<feature type="compositionally biased region" description="Gly residues" evidence="2">
    <location>
        <begin position="359"/>
        <end position="381"/>
    </location>
</feature>
<feature type="binding site" evidence="1">
    <location>
        <position position="42"/>
    </location>
    <ligand>
        <name>S-adenosyl-L-methionine</name>
        <dbReference type="ChEBI" id="CHEBI:59789"/>
    </ligand>
</feature>
<feature type="binding site" evidence="1">
    <location>
        <position position="44"/>
    </location>
    <ligand>
        <name>S-adenosyl-L-methionine</name>
        <dbReference type="ChEBI" id="CHEBI:59789"/>
    </ligand>
</feature>
<feature type="binding site" evidence="1">
    <location>
        <position position="69"/>
    </location>
    <ligand>
        <name>S-adenosyl-L-methionine</name>
        <dbReference type="ChEBI" id="CHEBI:59789"/>
    </ligand>
</feature>
<feature type="binding site" evidence="1">
    <location>
        <position position="90"/>
    </location>
    <ligand>
        <name>S-adenosyl-L-methionine</name>
        <dbReference type="ChEBI" id="CHEBI:59789"/>
    </ligand>
</feature>
<feature type="binding site" evidence="1">
    <location>
        <position position="115"/>
    </location>
    <ligand>
        <name>S-adenosyl-L-methionine</name>
        <dbReference type="ChEBI" id="CHEBI:59789"/>
    </ligand>
</feature>
<feature type="binding site" evidence="1">
    <location>
        <position position="131"/>
    </location>
    <ligand>
        <name>S-adenosyl-L-methionine</name>
        <dbReference type="ChEBI" id="CHEBI:59789"/>
    </ligand>
</feature>
<feature type="sequence conflict" description="In Ref. 1; AAA26492." evidence="3" ref="1">
    <original>G</original>
    <variation>V</variation>
    <location>
        <position position="71"/>
    </location>
</feature>
<feature type="sequence conflict" description="In Ref. 1; AAA26492." evidence="3" ref="1">
    <location>
        <begin position="191"/>
        <end position="201"/>
    </location>
</feature>
<feature type="sequence conflict" description="In Ref. 1; AAA26492." evidence="3" ref="1">
    <original>L</original>
    <variation>F</variation>
    <location>
        <position position="257"/>
    </location>
</feature>
<feature type="helix" evidence="4">
    <location>
        <begin position="47"/>
        <end position="56"/>
    </location>
</feature>
<feature type="strand" evidence="4">
    <location>
        <begin position="64"/>
        <end position="68"/>
    </location>
</feature>
<feature type="helix" evidence="4">
    <location>
        <begin position="74"/>
        <end position="80"/>
    </location>
</feature>
<feature type="strand" evidence="4">
    <location>
        <begin position="83"/>
        <end position="89"/>
    </location>
</feature>
<feature type="helix" evidence="4">
    <location>
        <begin position="93"/>
        <end position="102"/>
    </location>
</feature>
<feature type="turn" evidence="4">
    <location>
        <begin position="103"/>
        <end position="105"/>
    </location>
</feature>
<feature type="strand" evidence="4">
    <location>
        <begin position="109"/>
        <end position="112"/>
    </location>
</feature>
<feature type="helix" evidence="4">
    <location>
        <begin position="116"/>
        <end position="118"/>
    </location>
</feature>
<feature type="strand" evidence="4">
    <location>
        <begin position="126"/>
        <end position="131"/>
    </location>
</feature>
<feature type="helix" evidence="4">
    <location>
        <begin position="134"/>
        <end position="136"/>
    </location>
</feature>
<feature type="helix" evidence="4">
    <location>
        <begin position="137"/>
        <end position="146"/>
    </location>
</feature>
<feature type="strand" evidence="4">
    <location>
        <begin position="150"/>
        <end position="158"/>
    </location>
</feature>
<feature type="helix" evidence="4">
    <location>
        <begin position="159"/>
        <end position="166"/>
    </location>
</feature>
<feature type="turn" evidence="4">
    <location>
        <begin position="167"/>
        <end position="169"/>
    </location>
</feature>
<feature type="helix" evidence="4">
    <location>
        <begin position="174"/>
        <end position="179"/>
    </location>
</feature>
<feature type="turn" evidence="4">
    <location>
        <begin position="180"/>
        <end position="182"/>
    </location>
</feature>
<feature type="strand" evidence="4">
    <location>
        <begin position="183"/>
        <end position="191"/>
    </location>
</feature>
<feature type="helix" evidence="4">
    <location>
        <begin position="193"/>
        <end position="195"/>
    </location>
</feature>
<feature type="strand" evidence="4">
    <location>
        <begin position="196"/>
        <end position="198"/>
    </location>
</feature>
<feature type="strand" evidence="4">
    <location>
        <begin position="204"/>
        <end position="211"/>
    </location>
</feature>
<feature type="helix" evidence="4">
    <location>
        <begin position="219"/>
        <end position="234"/>
    </location>
</feature>
<feature type="helix" evidence="4">
    <location>
        <begin position="240"/>
        <end position="245"/>
    </location>
</feature>
<feature type="helix" evidence="4">
    <location>
        <begin position="250"/>
        <end position="260"/>
    </location>
</feature>
<feature type="helix" evidence="4">
    <location>
        <begin position="268"/>
        <end position="270"/>
    </location>
</feature>
<feature type="helix" evidence="4">
    <location>
        <begin position="273"/>
        <end position="283"/>
    </location>
</feature>
<comment type="function">
    <text>This protein produces a dimethylation of the adenine residue at position 2085 in 23S rRNA, resulting in reduced affinity between ribosomes and macrolide-lincosamide-streptogramin B antibiotics.</text>
</comment>
<comment type="catalytic activity">
    <reaction>
        <text>adenosine(2085) in 23S rRNA + 2 S-adenosyl-L-methionine = N(6)-dimethyladenosine(2085) in 23S rRNA + 2 S-adenosyl-L-homocysteine + 2 H(+)</text>
        <dbReference type="Rhea" id="RHEA:42784"/>
        <dbReference type="Rhea" id="RHEA-COMP:10237"/>
        <dbReference type="Rhea" id="RHEA-COMP:10238"/>
        <dbReference type="ChEBI" id="CHEBI:15378"/>
        <dbReference type="ChEBI" id="CHEBI:57856"/>
        <dbReference type="ChEBI" id="CHEBI:59789"/>
        <dbReference type="ChEBI" id="CHEBI:74411"/>
        <dbReference type="ChEBI" id="CHEBI:74493"/>
        <dbReference type="EC" id="2.1.1.184"/>
    </reaction>
</comment>
<comment type="similarity">
    <text evidence="1">Belongs to the class I-like SAM-binding methyltransferase superfamily. rRNA adenine N(6)-methyltransferase family.</text>
</comment>
<proteinExistence type="evidence at protein level"/>
<gene>
    <name type="primary">ermE</name>
    <name type="ordered locus">SACE_0733</name>
</gene>
<name>ERME_SACEN</name>
<reference key="1">
    <citation type="journal article" date="1985" name="Gene">
        <title>N-methyl transferase of Streptomyces erythraeus that confers resistance to the macrolide-lincosamide-streptogramin B antibiotics: amino acid sequence and its homology to cognate R-factor enzymes from pathogenic bacilli and cocci.</title>
        <authorList>
            <person name="Uchiyama H."/>
            <person name="Weisblum B."/>
        </authorList>
    </citation>
    <scope>NUCLEOTIDE SEQUENCE [GENOMIC DNA]</scope>
</reference>
<reference key="2">
    <citation type="journal article" date="1990" name="FEBS Lett.">
        <title>A repeated decapeptide motif in the C-terminal domain of the ribosomal RNA methyltransferase from the erythromycin producer Saccharopolyspora erythraea.</title>
        <authorList>
            <person name="Dhillon N."/>
            <person name="Leadlay P.F."/>
        </authorList>
    </citation>
    <scope>NUCLEOTIDE SEQUENCE [GENOMIC DNA]</scope>
</reference>
<reference key="3">
    <citation type="journal article" date="2007" name="Nat. Biotechnol.">
        <title>Complete genome sequence of the erythromycin-producing bacterium Saccharopolyspora erythraea NRRL23338.</title>
        <authorList>
            <person name="Oliynyk M."/>
            <person name="Samborskyy M."/>
            <person name="Lester J.B."/>
            <person name="Mironenko T."/>
            <person name="Scott N."/>
            <person name="Dickens S."/>
            <person name="Haydock S.F."/>
            <person name="Leadlay P.F."/>
        </authorList>
    </citation>
    <scope>NUCLEOTIDE SEQUENCE [LARGE SCALE GENOMIC DNA]</scope>
    <source>
        <strain>ATCC 11635 / DSM 40517 / JCM 4748 / NBRC 13426 / NCIMB 8594 / NRRL 2338</strain>
    </source>
</reference>
<reference key="4">
    <citation type="journal article" date="1985" name="Gene">
        <title>Cloning and analysis of the promoter region of the erythromycin resistance gene (ermE) of Streptomyces erythraeus.</title>
        <authorList>
            <person name="Bibb M.J."/>
            <person name="Janssen G.R."/>
            <person name="Ward J.M."/>
        </authorList>
    </citation>
    <scope>NUCLEOTIDE SEQUENCE [GENOMIC DNA] OF 1-133</scope>
</reference>
<accession>P07287</accession>
<accession>A4F7Q0</accession>
<accession>Q54094</accession>